<name>PLH20_FORAG</name>
<evidence type="ECO:0000250" key="1">
    <source>
        <dbReference type="UniProtKB" id="Q82PP4"/>
    </source>
</evidence>
<evidence type="ECO:0000255" key="2">
    <source>
        <dbReference type="PROSITE-ProRule" id="PRU00303"/>
    </source>
</evidence>
<evidence type="ECO:0000269" key="3">
    <source>
    </source>
</evidence>
<evidence type="ECO:0000269" key="4">
    <source ref="2"/>
</evidence>
<evidence type="ECO:0000303" key="5">
    <source>
    </source>
</evidence>
<evidence type="ECO:0000305" key="6"/>
<evidence type="ECO:0000305" key="7">
    <source>
    </source>
</evidence>
<evidence type="ECO:0000305" key="8">
    <source ref="2"/>
</evidence>
<reference key="1">
    <citation type="journal article" date="2013" name="Appl. Environ. Microbiol.">
        <title>The genome of the alga-associated marine flavobacterium Formosa agariphila KMM 3901T reveals a broad potential for degradation of algal polysaccharides.</title>
        <authorList>
            <person name="Mann A.J."/>
            <person name="Hahnke R.L."/>
            <person name="Huang S."/>
            <person name="Werner J."/>
            <person name="Xing P."/>
            <person name="Barbeyron T."/>
            <person name="Huettel B."/>
            <person name="Stueber K."/>
            <person name="Reinhardt R."/>
            <person name="Harder J."/>
            <person name="Gloeckner F.O."/>
            <person name="Amann R.I."/>
            <person name="Teeling H."/>
        </authorList>
    </citation>
    <scope>NUCLEOTIDE SEQUENCE [LARGE SCALE GENOMIC DNA]</scope>
    <source>
        <strain>DSM 15362 / KCTC 12365 / LMG 23005 / KMM 3901 / M-2Alg 35-1</strain>
    </source>
</reference>
<reference key="2">
    <citation type="journal article" date="2017" name="Algal Res.">
        <title>The enzymatic ulvan depolymerisation system from the alga-associated marine flavobacterium Formosa agariphila.</title>
        <authorList>
            <person name="Salinas A."/>
            <person name="French C.E."/>
        </authorList>
    </citation>
    <scope>REVISION OF GENE MODEL</scope>
    <scope>FUNCTION</scope>
</reference>
<reference key="3">
    <citation type="journal article" date="2019" name="Nat. Chem. Biol.">
        <title>A marine bacterial enzymatic cascade degrades the algal polysaccharide ulvan.</title>
        <authorList>
            <person name="Reisky L."/>
            <person name="Prechoux A."/>
            <person name="Zuehlke M.K."/>
            <person name="Baeumgen M."/>
            <person name="Robb C.S."/>
            <person name="Gerlach N."/>
            <person name="Roret T."/>
            <person name="Stanetty C."/>
            <person name="Larocque R."/>
            <person name="Michel G."/>
            <person name="Song T."/>
            <person name="Markert S."/>
            <person name="Unfried F."/>
            <person name="Mihovilovic M.D."/>
            <person name="Trautwein-Schult A."/>
            <person name="Becher D."/>
            <person name="Schweder T."/>
            <person name="Bornscheuer U.T."/>
            <person name="Hehemann J.H."/>
        </authorList>
    </citation>
    <scope>FUNCTION</scope>
    <scope>CATALYTIC ACTIVITY</scope>
    <scope>SUBCELLULAR LOCATION</scope>
    <scope>INDUCTION</scope>
</reference>
<dbReference type="EC" id="3.2.1.40" evidence="3"/>
<dbReference type="EMBL" id="HG315671">
    <property type="protein sequence ID" value="CDF79921.1"/>
    <property type="status" value="ALT_INIT"/>
    <property type="molecule type" value="Genomic_DNA"/>
</dbReference>
<dbReference type="RefSeq" id="WP_038530512.1">
    <property type="nucleotide sequence ID" value="NZ_HG315671.1"/>
</dbReference>
<dbReference type="SMR" id="T2KNB2"/>
<dbReference type="STRING" id="1347342.BN863_22090"/>
<dbReference type="PATRIC" id="fig|1347342.6.peg.2216"/>
<dbReference type="eggNOG" id="COG3408">
    <property type="taxonomic scope" value="Bacteria"/>
</dbReference>
<dbReference type="HOGENOM" id="CLU_002926_1_1_10"/>
<dbReference type="Proteomes" id="UP000016160">
    <property type="component" value="Chromosome"/>
</dbReference>
<dbReference type="GO" id="GO:0005886">
    <property type="term" value="C:plasma membrane"/>
    <property type="evidence" value="ECO:0007669"/>
    <property type="project" value="UniProtKB-SubCell"/>
</dbReference>
<dbReference type="GO" id="GO:0030596">
    <property type="term" value="F:alpha-L-rhamnosidase activity"/>
    <property type="evidence" value="ECO:0007669"/>
    <property type="project" value="UniProtKB-EC"/>
</dbReference>
<dbReference type="GO" id="GO:0005975">
    <property type="term" value="P:carbohydrate metabolic process"/>
    <property type="evidence" value="ECO:0007669"/>
    <property type="project" value="InterPro"/>
</dbReference>
<dbReference type="Gene3D" id="1.50.10.10">
    <property type="match status" value="1"/>
</dbReference>
<dbReference type="Gene3D" id="2.60.120.260">
    <property type="entry name" value="Galactose-binding domain-like"/>
    <property type="match status" value="2"/>
</dbReference>
<dbReference type="Gene3D" id="2.60.40.10">
    <property type="entry name" value="Immunoglobulins"/>
    <property type="match status" value="1"/>
</dbReference>
<dbReference type="Gene3D" id="2.60.420.10">
    <property type="entry name" value="Maltose phosphorylase, domain 3"/>
    <property type="match status" value="1"/>
</dbReference>
<dbReference type="InterPro" id="IPR008928">
    <property type="entry name" value="6-hairpin_glycosidase_sf"/>
</dbReference>
<dbReference type="InterPro" id="IPR012341">
    <property type="entry name" value="6hp_glycosidase-like_sf"/>
</dbReference>
<dbReference type="InterPro" id="IPR016007">
    <property type="entry name" value="Alpha_rhamnosid"/>
</dbReference>
<dbReference type="InterPro" id="IPR035396">
    <property type="entry name" value="Bac_rhamnosid6H"/>
</dbReference>
<dbReference type="InterPro" id="IPR035398">
    <property type="entry name" value="Bac_rhamnosid_C"/>
</dbReference>
<dbReference type="InterPro" id="IPR013737">
    <property type="entry name" value="Bac_rhamnosid_N"/>
</dbReference>
<dbReference type="InterPro" id="IPR013783">
    <property type="entry name" value="Ig-like_fold"/>
</dbReference>
<dbReference type="InterPro" id="IPR008902">
    <property type="entry name" value="Rhamnosid_concanavalin"/>
</dbReference>
<dbReference type="PANTHER" id="PTHR33307">
    <property type="entry name" value="ALPHA-RHAMNOSIDASE (EUROFUNG)"/>
    <property type="match status" value="1"/>
</dbReference>
<dbReference type="PANTHER" id="PTHR33307:SF6">
    <property type="entry name" value="ALPHA-RHAMNOSIDASE (EUROFUNG)-RELATED"/>
    <property type="match status" value="1"/>
</dbReference>
<dbReference type="Pfam" id="PF05592">
    <property type="entry name" value="Bac_rhamnosid"/>
    <property type="match status" value="1"/>
</dbReference>
<dbReference type="Pfam" id="PF17389">
    <property type="entry name" value="Bac_rhamnosid6H"/>
    <property type="match status" value="1"/>
</dbReference>
<dbReference type="Pfam" id="PF17390">
    <property type="entry name" value="Bac_rhamnosid_C"/>
    <property type="match status" value="1"/>
</dbReference>
<dbReference type="Pfam" id="PF08531">
    <property type="entry name" value="Bac_rhamnosid_N"/>
    <property type="match status" value="1"/>
</dbReference>
<dbReference type="PIRSF" id="PIRSF010631">
    <property type="entry name" value="A-rhamnsds"/>
    <property type="match status" value="1"/>
</dbReference>
<dbReference type="SUPFAM" id="SSF48208">
    <property type="entry name" value="Six-hairpin glycosidases"/>
    <property type="match status" value="1"/>
</dbReference>
<dbReference type="PROSITE" id="PS51257">
    <property type="entry name" value="PROKAR_LIPOPROTEIN"/>
    <property type="match status" value="1"/>
</dbReference>
<organism>
    <name type="scientific">Formosa agariphila (strain DSM 15362 / KCTC 12365 / LMG 23005 / KMM 3901 / M-2Alg 35-1)</name>
    <dbReference type="NCBI Taxonomy" id="1347342"/>
    <lineage>
        <taxon>Bacteria</taxon>
        <taxon>Pseudomonadati</taxon>
        <taxon>Bacteroidota</taxon>
        <taxon>Flavobacteriia</taxon>
        <taxon>Flavobacteriales</taxon>
        <taxon>Flavobacteriaceae</taxon>
        <taxon>Formosa</taxon>
    </lineage>
</organism>
<accession>T2KNB2</accession>
<gene>
    <name type="ORF">BN863_22090</name>
</gene>
<sequence>MILHKSVFKSYIYVLTYFVFFSVMSCENSSVLQEAKHLTISEGFKNPLGFYDAKPTFSWELPVVEGVISQSAYQIVVASSPDLLPNNPDLWDSNKQSSSQSVWINYEGKPLVSRQKVFWQVKYWNQDDKASNWSPVQNFELGLLNNSDWKAKWIGLPTKEEGVLGSQDNIIHRPQYLRKVFELSNDVANARLYITAKGVFDVAINGEDVSDDVMPPGYTPYKKRIETITYDVTDLIESGQNTIGVEVAAGWHSGRLGWMKSYWSDTESPKILCQLEVTMKDGSKASIISDDTWKATTQGPIRISEIYDGETYDAHLEMPHWTTNSFDDKNWKAVQAFPVTSTIKLEPKRHTTVKSKIVLESKEIILKADAAIFDLQQNMVGVPLLKVPMKMGDTLKIRFAEMLSPDGTFYTDNYRSAQSTDYYIAAKEGTIEWMPKFTFHGFRYVELSGFDASKTPSKNWVKGVVQYSNFNENGSFTSSHEKLNQLQSNIVWGLRGNFFDIPTDCPQRDERMGWTGDAQVFGPTSMFNADVYKFWASWMQSVRESQYDNGGIPFVVPDVLHNGKVSSGWGDVCTIIPWKIYYRTGDVGILEENYDMMKKWVAHHQATSKDFISHMNSFADWLQPYPENGNNKGDTSHSLIGTAFFAHSAKLTAKTAEVLGKKEEQATYEALYKSVAKAFENAFFKNGKVKDVTATQTSYLLALAFDLLSEENKENAKQQLLEKISEADNHLRTGFLGTPLLSEVLDETGEIDLMYKLLFNETYPSWFYSINQGATTIWERWNSYSKAEGFNPMKMNSLNHYAYGAIGEWMYERITGIAPLQAGYKIISIAPIPKAPLTSASATLNTPYGEVASSWEIKNETLFLEVVVPPNTTAEIEIPTDNSESLKVDNENFTNGKNLKLIKNEKRKIKILAQPGTYEFQAKYSL</sequence>
<keyword id="KW-1003">Cell membrane</keyword>
<keyword id="KW-0326">Glycosidase</keyword>
<keyword id="KW-0378">Hydrolase</keyword>
<keyword id="KW-0449">Lipoprotein</keyword>
<keyword id="KW-0472">Membrane</keyword>
<keyword id="KW-0564">Palmitate</keyword>
<keyword id="KW-1185">Reference proteome</keyword>
<keyword id="KW-0732">Signal</keyword>
<comment type="function">
    <text evidence="3 4 8">Alpha-L-rhamnosidase involved in ulvan degradation (PubMed:31285597, Ref.2). Ulvan is the main polysaccharide component of the Ulvales (green seaweed) cell wall. It is composed of disaccharide building blocks comprising 3-sulfated rhamnose (Rha3S) linked to D-glucuronic acid (GlcA), L-iduronic acid (IduA), or D-xylose (Xyl) (Probable). Alpha-L-rhamnosidase converts Rha-Xyl-Rha3S, the product of a sulfatase acting on Rha3S-Xyl-Rha3S oligosaccharides, to Rha and Xyl-Rha3S (PubMed:31285597). The enzyme is able to degrade p-nitrophenyl-alpha-L-rhamnopyranoside (PNP-Rha) in vitro (Ref.2).</text>
</comment>
<comment type="catalytic activity">
    <reaction evidence="3">
        <text>Hydrolysis of terminal non-reducing alpha-L-rhamnose residues in alpha-L-rhamnosides.</text>
        <dbReference type="EC" id="3.2.1.40"/>
    </reaction>
</comment>
<comment type="subcellular location">
    <subcellularLocation>
        <location evidence="2">Cell membrane</location>
        <topology evidence="2">Lipid-anchor</topology>
        <orientation evidence="7">Periplasmic side</orientation>
    </subcellularLocation>
</comment>
<comment type="induction">
    <text evidence="3">By ulvan and rhamnose.</text>
</comment>
<comment type="similarity">
    <text evidence="6">Belongs to the glycosyl hydrolase 78 family.</text>
</comment>
<comment type="sequence caution" evidence="8">
    <conflict type="erroneous initiation">
        <sequence resource="EMBL-CDS" id="CDF79921"/>
    </conflict>
    <text>Truncated N-terminus.</text>
</comment>
<protein>
    <recommendedName>
        <fullName evidence="5">Alpha-L-rhamnosidase</fullName>
        <ecNumber evidence="3">3.2.1.40</ecNumber>
    </recommendedName>
    <alternativeName>
        <fullName evidence="6">Glycosyl hydrolase 78 family protein P20</fullName>
        <shortName evidence="5">P20_GH78</shortName>
    </alternativeName>
    <alternativeName>
        <fullName evidence="5">Polysaccharide utilization locus H protein P20</fullName>
        <shortName>PUL H protein P20</shortName>
    </alternativeName>
</protein>
<proteinExistence type="evidence at protein level"/>
<feature type="signal peptide" evidence="2">
    <location>
        <begin position="1"/>
        <end position="25"/>
    </location>
</feature>
<feature type="chain" id="PRO_0000448311" description="Alpha-L-rhamnosidase">
    <location>
        <begin position="26"/>
        <end position="926"/>
    </location>
</feature>
<feature type="active site" description="Proton donor" evidence="1">
    <location>
        <position position="510"/>
    </location>
</feature>
<feature type="active site" description="Proton acceptor" evidence="1">
    <location>
        <position position="779"/>
    </location>
</feature>
<feature type="binding site" evidence="1">
    <location>
        <position position="504"/>
    </location>
    <ligand>
        <name>alpha-L-rhamnose</name>
        <dbReference type="ChEBI" id="CHEBI:27907"/>
    </ligand>
</feature>
<feature type="binding site" evidence="1">
    <location>
        <begin position="508"/>
        <end position="510"/>
    </location>
    <ligand>
        <name>alpha-L-rhamnose</name>
        <dbReference type="ChEBI" id="CHEBI:27907"/>
    </ligand>
</feature>
<feature type="binding site" evidence="1">
    <location>
        <position position="517"/>
    </location>
    <ligand>
        <name>alpha-L-rhamnose</name>
        <dbReference type="ChEBI" id="CHEBI:27907"/>
    </ligand>
</feature>
<feature type="binding site" evidence="1">
    <location>
        <position position="569"/>
    </location>
    <ligand>
        <name>alpha-L-rhamnose</name>
        <dbReference type="ChEBI" id="CHEBI:27907"/>
    </ligand>
</feature>
<feature type="binding site" evidence="1">
    <location>
        <position position="800"/>
    </location>
    <ligand>
        <name>alpha-L-rhamnose</name>
        <dbReference type="ChEBI" id="CHEBI:27907"/>
    </ligand>
</feature>
<feature type="lipid moiety-binding region" description="N-palmitoyl cysteine" evidence="2">
    <location>
        <position position="26"/>
    </location>
</feature>
<feature type="lipid moiety-binding region" description="S-diacylglycerol cysteine" evidence="2">
    <location>
        <position position="26"/>
    </location>
</feature>